<evidence type="ECO:0000250" key="1"/>
<evidence type="ECO:0000250" key="2">
    <source>
        <dbReference type="UniProtKB" id="P11177"/>
    </source>
</evidence>
<evidence type="ECO:0000255" key="3"/>
<evidence type="ECO:0000256" key="4">
    <source>
        <dbReference type="SAM" id="MobiDB-lite"/>
    </source>
</evidence>
<evidence type="ECO:0000303" key="5">
    <source>
    </source>
</evidence>
<evidence type="ECO:0000305" key="6"/>
<feature type="transit peptide" description="Chloroplast" evidence="3">
    <location>
        <begin position="1"/>
        <end position="57"/>
    </location>
</feature>
<feature type="chain" id="PRO_0000421376" description="Pyruvate dehydrogenase E1 component subunit beta-4, chloroplastic">
    <location>
        <begin position="58"/>
        <end position="400"/>
    </location>
</feature>
<feature type="region of interest" description="Disordered" evidence="4">
    <location>
        <begin position="1"/>
        <end position="34"/>
    </location>
</feature>
<feature type="compositionally biased region" description="Low complexity" evidence="4">
    <location>
        <begin position="9"/>
        <end position="34"/>
    </location>
</feature>
<feature type="binding site" evidence="2">
    <location>
        <position position="136"/>
    </location>
    <ligand>
        <name>thiamine diphosphate</name>
        <dbReference type="ChEBI" id="CHEBI:58937"/>
        <note>ligand shared with alpha subunit</note>
    </ligand>
</feature>
<feature type="binding site" evidence="2">
    <location>
        <position position="189"/>
    </location>
    <ligand>
        <name>K(+)</name>
        <dbReference type="ChEBI" id="CHEBI:29103"/>
        <note>structural</note>
    </ligand>
</feature>
<feature type="binding site" evidence="2">
    <location>
        <position position="237"/>
    </location>
    <ligand>
        <name>K(+)</name>
        <dbReference type="ChEBI" id="CHEBI:29103"/>
        <note>structural</note>
    </ligand>
</feature>
<feature type="binding site" evidence="2">
    <location>
        <position position="238"/>
    </location>
    <ligand>
        <name>K(+)</name>
        <dbReference type="ChEBI" id="CHEBI:29103"/>
        <note>structural</note>
    </ligand>
</feature>
<feature type="binding site" evidence="2">
    <location>
        <position position="242"/>
    </location>
    <ligand>
        <name>K(+)</name>
        <dbReference type="ChEBI" id="CHEBI:29103"/>
        <note>structural</note>
    </ligand>
</feature>
<feature type="splice variant" id="VSP_045639" description="In isoform 2." evidence="5">
    <location>
        <begin position="1"/>
        <end position="93"/>
    </location>
</feature>
<organism>
    <name type="scientific">Oryza sativa subsp. japonica</name>
    <name type="common">Rice</name>
    <dbReference type="NCBI Taxonomy" id="39947"/>
    <lineage>
        <taxon>Eukaryota</taxon>
        <taxon>Viridiplantae</taxon>
        <taxon>Streptophyta</taxon>
        <taxon>Embryophyta</taxon>
        <taxon>Tracheophyta</taxon>
        <taxon>Spermatophyta</taxon>
        <taxon>Magnoliopsida</taxon>
        <taxon>Liliopsida</taxon>
        <taxon>Poales</taxon>
        <taxon>Poaceae</taxon>
        <taxon>BOP clade</taxon>
        <taxon>Oryzoideae</taxon>
        <taxon>Oryzeae</taxon>
        <taxon>Oryzinae</taxon>
        <taxon>Oryza</taxon>
        <taxon>Oryza sativa</taxon>
    </lineage>
</organism>
<name>ODPB4_ORYSJ</name>
<comment type="function">
    <text evidence="1">The pyruvate dehydrogenase complex catalyzes the overall conversion of pyruvate to acetyl-CoA and CO(2). It contains multiple copies of three enzymatic components: pyruvate dehydrogenase (E1), dihydrolipoamide acetyltransferase (E2) and lipoamide dehydrogenase (E3) (By similarity).</text>
</comment>
<comment type="catalytic activity">
    <reaction>
        <text>N(6)-[(R)-lipoyl]-L-lysyl-[protein] + pyruvate + H(+) = N(6)-[(R)-S(8)-acetyldihydrolipoyl]-L-lysyl-[protein] + CO2</text>
        <dbReference type="Rhea" id="RHEA:19189"/>
        <dbReference type="Rhea" id="RHEA-COMP:10474"/>
        <dbReference type="Rhea" id="RHEA-COMP:10478"/>
        <dbReference type="ChEBI" id="CHEBI:15361"/>
        <dbReference type="ChEBI" id="CHEBI:15378"/>
        <dbReference type="ChEBI" id="CHEBI:16526"/>
        <dbReference type="ChEBI" id="CHEBI:83099"/>
        <dbReference type="ChEBI" id="CHEBI:83111"/>
        <dbReference type="EC" id="1.2.4.1"/>
    </reaction>
</comment>
<comment type="cofactor">
    <cofactor evidence="2">
        <name>thiamine diphosphate</name>
        <dbReference type="ChEBI" id="CHEBI:58937"/>
    </cofactor>
</comment>
<comment type="subunit">
    <text evidence="1">Tetramer of 2 alpha and 2 beta subunits.</text>
</comment>
<comment type="subcellular location">
    <subcellularLocation>
        <location evidence="6">Plastid</location>
        <location evidence="6">Chloroplast</location>
    </subcellularLocation>
</comment>
<comment type="alternative products">
    <event type="alternative splicing"/>
    <isoform>
        <id>Q10G39-1</id>
        <name>1</name>
        <sequence type="displayed"/>
    </isoform>
    <isoform>
        <id>Q10G39-2</id>
        <name>2</name>
        <sequence type="described" ref="VSP_045639"/>
    </isoform>
</comment>
<comment type="miscellaneous">
    <molecule>Isoform 2</molecule>
    <text evidence="6">May be due to an intron retention.</text>
</comment>
<reference key="1">
    <citation type="journal article" date="2005" name="Genome Res.">
        <title>Sequence, annotation, and analysis of synteny between rice chromosome 3 and diverged grass species.</title>
        <authorList>
            <consortium name="The rice chromosome 3 sequencing consortium"/>
            <person name="Buell C.R."/>
            <person name="Yuan Q."/>
            <person name="Ouyang S."/>
            <person name="Liu J."/>
            <person name="Zhu W."/>
            <person name="Wang A."/>
            <person name="Maiti R."/>
            <person name="Haas B."/>
            <person name="Wortman J."/>
            <person name="Pertea M."/>
            <person name="Jones K.M."/>
            <person name="Kim M."/>
            <person name="Overton L."/>
            <person name="Tsitrin T."/>
            <person name="Fadrosh D."/>
            <person name="Bera J."/>
            <person name="Weaver B."/>
            <person name="Jin S."/>
            <person name="Johri S."/>
            <person name="Reardon M."/>
            <person name="Webb K."/>
            <person name="Hill J."/>
            <person name="Moffat K."/>
            <person name="Tallon L."/>
            <person name="Van Aken S."/>
            <person name="Lewis M."/>
            <person name="Utterback T."/>
            <person name="Feldblyum T."/>
            <person name="Zismann V."/>
            <person name="Iobst S."/>
            <person name="Hsiao J."/>
            <person name="de Vazeille A.R."/>
            <person name="Salzberg S.L."/>
            <person name="White O."/>
            <person name="Fraser C.M."/>
            <person name="Yu Y."/>
            <person name="Kim H."/>
            <person name="Rambo T."/>
            <person name="Currie J."/>
            <person name="Collura K."/>
            <person name="Kernodle-Thompson S."/>
            <person name="Wei F."/>
            <person name="Kudrna K."/>
            <person name="Ammiraju J.S.S."/>
            <person name="Luo M."/>
            <person name="Goicoechea J.L."/>
            <person name="Wing R.A."/>
            <person name="Henry D."/>
            <person name="Oates R."/>
            <person name="Palmer M."/>
            <person name="Pries G."/>
            <person name="Saski C."/>
            <person name="Simmons J."/>
            <person name="Soderlund C."/>
            <person name="Nelson W."/>
            <person name="de la Bastide M."/>
            <person name="Spiegel L."/>
            <person name="Nascimento L."/>
            <person name="Huang E."/>
            <person name="Preston R."/>
            <person name="Zutavern T."/>
            <person name="Palmer L."/>
            <person name="O'Shaughnessy A."/>
            <person name="Dike S."/>
            <person name="McCombie W.R."/>
            <person name="Minx P."/>
            <person name="Cordum H."/>
            <person name="Wilson R."/>
            <person name="Jin W."/>
            <person name="Lee H.R."/>
            <person name="Jiang J."/>
            <person name="Jackson S."/>
        </authorList>
    </citation>
    <scope>NUCLEOTIDE SEQUENCE [LARGE SCALE GENOMIC DNA]</scope>
    <source>
        <strain>cv. Nipponbare</strain>
    </source>
</reference>
<reference key="2">
    <citation type="journal article" date="2005" name="Nature">
        <title>The map-based sequence of the rice genome.</title>
        <authorList>
            <consortium name="International rice genome sequencing project (IRGSP)"/>
        </authorList>
    </citation>
    <scope>NUCLEOTIDE SEQUENCE [LARGE SCALE GENOMIC DNA]</scope>
    <source>
        <strain>cv. Nipponbare</strain>
    </source>
</reference>
<reference key="3">
    <citation type="journal article" date="2008" name="Nucleic Acids Res.">
        <title>The rice annotation project database (RAP-DB): 2008 update.</title>
        <authorList>
            <consortium name="The rice annotation project (RAP)"/>
        </authorList>
    </citation>
    <scope>GENOME REANNOTATION</scope>
    <source>
        <strain>cv. Nipponbare</strain>
    </source>
</reference>
<reference key="4">
    <citation type="journal article" date="2013" name="Rice">
        <title>Improvement of the Oryza sativa Nipponbare reference genome using next generation sequence and optical map data.</title>
        <authorList>
            <person name="Kawahara Y."/>
            <person name="de la Bastide M."/>
            <person name="Hamilton J.P."/>
            <person name="Kanamori H."/>
            <person name="McCombie W.R."/>
            <person name="Ouyang S."/>
            <person name="Schwartz D.C."/>
            <person name="Tanaka T."/>
            <person name="Wu J."/>
            <person name="Zhou S."/>
            <person name="Childs K.L."/>
            <person name="Davidson R.M."/>
            <person name="Lin H."/>
            <person name="Quesada-Ocampo L."/>
            <person name="Vaillancourt B."/>
            <person name="Sakai H."/>
            <person name="Lee S.S."/>
            <person name="Kim J."/>
            <person name="Numa H."/>
            <person name="Itoh T."/>
            <person name="Buell C.R."/>
            <person name="Matsumoto T."/>
        </authorList>
    </citation>
    <scope>GENOME REANNOTATION</scope>
    <source>
        <strain>cv. Nipponbare</strain>
    </source>
</reference>
<reference key="5">
    <citation type="journal article" date="2005" name="PLoS Biol.">
        <title>The genomes of Oryza sativa: a history of duplications.</title>
        <authorList>
            <person name="Yu J."/>
            <person name="Wang J."/>
            <person name="Lin W."/>
            <person name="Li S."/>
            <person name="Li H."/>
            <person name="Zhou J."/>
            <person name="Ni P."/>
            <person name="Dong W."/>
            <person name="Hu S."/>
            <person name="Zeng C."/>
            <person name="Zhang J."/>
            <person name="Zhang Y."/>
            <person name="Li R."/>
            <person name="Xu Z."/>
            <person name="Li S."/>
            <person name="Li X."/>
            <person name="Zheng H."/>
            <person name="Cong L."/>
            <person name="Lin L."/>
            <person name="Yin J."/>
            <person name="Geng J."/>
            <person name="Li G."/>
            <person name="Shi J."/>
            <person name="Liu J."/>
            <person name="Lv H."/>
            <person name="Li J."/>
            <person name="Wang J."/>
            <person name="Deng Y."/>
            <person name="Ran L."/>
            <person name="Shi X."/>
            <person name="Wang X."/>
            <person name="Wu Q."/>
            <person name="Li C."/>
            <person name="Ren X."/>
            <person name="Wang J."/>
            <person name="Wang X."/>
            <person name="Li D."/>
            <person name="Liu D."/>
            <person name="Zhang X."/>
            <person name="Ji Z."/>
            <person name="Zhao W."/>
            <person name="Sun Y."/>
            <person name="Zhang Z."/>
            <person name="Bao J."/>
            <person name="Han Y."/>
            <person name="Dong L."/>
            <person name="Ji J."/>
            <person name="Chen P."/>
            <person name="Wu S."/>
            <person name="Liu J."/>
            <person name="Xiao Y."/>
            <person name="Bu D."/>
            <person name="Tan J."/>
            <person name="Yang L."/>
            <person name="Ye C."/>
            <person name="Zhang J."/>
            <person name="Xu J."/>
            <person name="Zhou Y."/>
            <person name="Yu Y."/>
            <person name="Zhang B."/>
            <person name="Zhuang S."/>
            <person name="Wei H."/>
            <person name="Liu B."/>
            <person name="Lei M."/>
            <person name="Yu H."/>
            <person name="Li Y."/>
            <person name="Xu H."/>
            <person name="Wei S."/>
            <person name="He X."/>
            <person name="Fang L."/>
            <person name="Zhang Z."/>
            <person name="Zhang Y."/>
            <person name="Huang X."/>
            <person name="Su Z."/>
            <person name="Tong W."/>
            <person name="Li J."/>
            <person name="Tong Z."/>
            <person name="Li S."/>
            <person name="Ye J."/>
            <person name="Wang L."/>
            <person name="Fang L."/>
            <person name="Lei T."/>
            <person name="Chen C.-S."/>
            <person name="Chen H.-C."/>
            <person name="Xu Z."/>
            <person name="Li H."/>
            <person name="Huang H."/>
            <person name="Zhang F."/>
            <person name="Xu H."/>
            <person name="Li N."/>
            <person name="Zhao C."/>
            <person name="Li S."/>
            <person name="Dong L."/>
            <person name="Huang Y."/>
            <person name="Li L."/>
            <person name="Xi Y."/>
            <person name="Qi Q."/>
            <person name="Li W."/>
            <person name="Zhang B."/>
            <person name="Hu W."/>
            <person name="Zhang Y."/>
            <person name="Tian X."/>
            <person name="Jiao Y."/>
            <person name="Liang X."/>
            <person name="Jin J."/>
            <person name="Gao L."/>
            <person name="Zheng W."/>
            <person name="Hao B."/>
            <person name="Liu S.-M."/>
            <person name="Wang W."/>
            <person name="Yuan L."/>
            <person name="Cao M."/>
            <person name="McDermott J."/>
            <person name="Samudrala R."/>
            <person name="Wang J."/>
            <person name="Wong G.K.-S."/>
            <person name="Yang H."/>
        </authorList>
    </citation>
    <scope>NUCLEOTIDE SEQUENCE [LARGE SCALE GENOMIC DNA]</scope>
    <source>
        <strain>cv. Nipponbare</strain>
    </source>
</reference>
<reference key="6">
    <citation type="journal article" date="2003" name="Science">
        <title>Collection, mapping, and annotation of over 28,000 cDNA clones from japonica rice.</title>
        <authorList>
            <consortium name="The rice full-length cDNA consortium"/>
        </authorList>
    </citation>
    <scope>NUCLEOTIDE SEQUENCE [LARGE SCALE MRNA] (ISOFORM 2)</scope>
    <source>
        <strain>cv. Nipponbare</strain>
    </source>
</reference>
<dbReference type="EC" id="1.2.4.1"/>
<dbReference type="EMBL" id="DP000009">
    <property type="protein sequence ID" value="ABF97865.1"/>
    <property type="molecule type" value="Genomic_DNA"/>
</dbReference>
<dbReference type="EMBL" id="DP000009">
    <property type="protein sequence ID" value="ABF97866.1"/>
    <property type="molecule type" value="Genomic_DNA"/>
</dbReference>
<dbReference type="EMBL" id="AP008209">
    <property type="protein sequence ID" value="BAF12677.1"/>
    <property type="molecule type" value="Genomic_DNA"/>
</dbReference>
<dbReference type="EMBL" id="AP014959">
    <property type="status" value="NOT_ANNOTATED_CDS"/>
    <property type="molecule type" value="Genomic_DNA"/>
</dbReference>
<dbReference type="EMBL" id="CM000140">
    <property type="protein sequence ID" value="EEE59584.1"/>
    <property type="molecule type" value="Genomic_DNA"/>
</dbReference>
<dbReference type="EMBL" id="AK069197">
    <property type="protein sequence ID" value="BAG91310.1"/>
    <property type="molecule type" value="mRNA"/>
</dbReference>
<dbReference type="EMBL" id="AK103256">
    <property type="protein sequence ID" value="BAG95979.1"/>
    <property type="molecule type" value="mRNA"/>
</dbReference>
<dbReference type="RefSeq" id="XP_015631374.1">
    <property type="nucleotide sequence ID" value="XM_015775888.1"/>
</dbReference>
<dbReference type="SMR" id="Q10G39"/>
<dbReference type="FunCoup" id="Q10G39">
    <property type="interactions" value="323"/>
</dbReference>
<dbReference type="STRING" id="39947.Q10G39"/>
<dbReference type="PaxDb" id="39947-Q10G39"/>
<dbReference type="KEGG" id="dosa:Os03g0645100"/>
<dbReference type="eggNOG" id="KOG0524">
    <property type="taxonomic scope" value="Eukaryota"/>
</dbReference>
<dbReference type="InParanoid" id="Q10G39"/>
<dbReference type="OrthoDB" id="10266385at2759"/>
<dbReference type="Proteomes" id="UP000000763">
    <property type="component" value="Chromosome 3"/>
</dbReference>
<dbReference type="Proteomes" id="UP000007752">
    <property type="component" value="Chromosome 3"/>
</dbReference>
<dbReference type="Proteomes" id="UP000059680">
    <property type="component" value="Chromosome 3"/>
</dbReference>
<dbReference type="GO" id="GO:0009507">
    <property type="term" value="C:chloroplast"/>
    <property type="evidence" value="ECO:0007669"/>
    <property type="project" value="UniProtKB-SubCell"/>
</dbReference>
<dbReference type="GO" id="GO:0046872">
    <property type="term" value="F:metal ion binding"/>
    <property type="evidence" value="ECO:0007669"/>
    <property type="project" value="UniProtKB-KW"/>
</dbReference>
<dbReference type="GO" id="GO:0004739">
    <property type="term" value="F:pyruvate dehydrogenase (acetyl-transferring) activity"/>
    <property type="evidence" value="ECO:0000318"/>
    <property type="project" value="GO_Central"/>
</dbReference>
<dbReference type="GO" id="GO:0006086">
    <property type="term" value="P:pyruvate decarboxylation to acetyl-CoA"/>
    <property type="evidence" value="ECO:0000318"/>
    <property type="project" value="GO_Central"/>
</dbReference>
<dbReference type="CDD" id="cd07036">
    <property type="entry name" value="TPP_PYR_E1-PDHc-beta_like"/>
    <property type="match status" value="1"/>
</dbReference>
<dbReference type="FunFam" id="3.40.50.970:FF:000001">
    <property type="entry name" value="Pyruvate dehydrogenase E1 beta subunit"/>
    <property type="match status" value="1"/>
</dbReference>
<dbReference type="FunFam" id="3.40.50.920:FF:000006">
    <property type="entry name" value="Pyruvate dehydrogenase E1 component subunit beta"/>
    <property type="match status" value="1"/>
</dbReference>
<dbReference type="Gene3D" id="3.40.50.920">
    <property type="match status" value="1"/>
</dbReference>
<dbReference type="Gene3D" id="3.40.50.970">
    <property type="match status" value="1"/>
</dbReference>
<dbReference type="InterPro" id="IPR029061">
    <property type="entry name" value="THDP-binding"/>
</dbReference>
<dbReference type="InterPro" id="IPR009014">
    <property type="entry name" value="Transketo_C/PFOR_II"/>
</dbReference>
<dbReference type="InterPro" id="IPR005475">
    <property type="entry name" value="Transketolase-like_Pyr-bd"/>
</dbReference>
<dbReference type="InterPro" id="IPR033248">
    <property type="entry name" value="Transketolase_C"/>
</dbReference>
<dbReference type="NCBIfam" id="NF006667">
    <property type="entry name" value="PRK09212.1"/>
    <property type="match status" value="1"/>
</dbReference>
<dbReference type="PANTHER" id="PTHR43257">
    <property type="entry name" value="PYRUVATE DEHYDROGENASE E1 COMPONENT BETA SUBUNIT"/>
    <property type="match status" value="1"/>
</dbReference>
<dbReference type="PANTHER" id="PTHR43257:SF2">
    <property type="entry name" value="PYRUVATE DEHYDROGENASE E1 COMPONENT SUBUNIT BETA"/>
    <property type="match status" value="1"/>
</dbReference>
<dbReference type="Pfam" id="PF02779">
    <property type="entry name" value="Transket_pyr"/>
    <property type="match status" value="1"/>
</dbReference>
<dbReference type="Pfam" id="PF02780">
    <property type="entry name" value="Transketolase_C"/>
    <property type="match status" value="1"/>
</dbReference>
<dbReference type="SMART" id="SM00861">
    <property type="entry name" value="Transket_pyr"/>
    <property type="match status" value="1"/>
</dbReference>
<dbReference type="SUPFAM" id="SSF52518">
    <property type="entry name" value="Thiamin diphosphate-binding fold (THDP-binding)"/>
    <property type="match status" value="1"/>
</dbReference>
<dbReference type="SUPFAM" id="SSF52922">
    <property type="entry name" value="TK C-terminal domain-like"/>
    <property type="match status" value="1"/>
</dbReference>
<gene>
    <name type="ordered locus">Os03g0645100</name>
    <name type="ordered locus">LOC_Os03g44300</name>
    <name type="ORF">OsJ_11888</name>
</gene>
<proteinExistence type="evidence at transcript level"/>
<sequence length="400" mass="42876">MAAASSLHAAPRVGSSSSFSSSSSAGRRSASAARSVRVAAAAGSCAARRAGGRMVARAAVASKAESPASAASSKSDGHEVLLFEALREALIEEMKEDPTVCVFGEDVGHYGGSYKVTKGLAEMFGDLRVLDTPIAENSFTGMGVGAAMKGLRPVVEGMNMGFLLLAYNQISNNCGMLHYTSGGQFKIPIVIRGPGGVGRQLGAEHSQRLESYFQSIPGLQMVACSTPYNAKGLMKAAIRSENPVVLFEHVLLYNLKEKIPDEEYVLCLEEAEMVRPGEHVTILTYSRMRYHVMQAAKTLVNKGYDPEVIDIRSLKPFDLHTIGNSIKKTHRVLIVEECMRTGGIGASLRSAIIDNFWDYLDAPIMCLSSQDVPTPYAAPLEDATVVQPAQIVAAVEQICQ</sequence>
<keyword id="KW-0025">Alternative splicing</keyword>
<keyword id="KW-0150">Chloroplast</keyword>
<keyword id="KW-0479">Metal-binding</keyword>
<keyword id="KW-0560">Oxidoreductase</keyword>
<keyword id="KW-0934">Plastid</keyword>
<keyword id="KW-0630">Potassium</keyword>
<keyword id="KW-0670">Pyruvate</keyword>
<keyword id="KW-1185">Reference proteome</keyword>
<keyword id="KW-0786">Thiamine pyrophosphate</keyword>
<keyword id="KW-0809">Transit peptide</keyword>
<accession>Q10G39</accession>
<accession>Q10G38</accession>
<protein>
    <recommendedName>
        <fullName>Pyruvate dehydrogenase E1 component subunit beta-4, chloroplastic</fullName>
        <ecNumber>1.2.4.1</ecNumber>
    </recommendedName>
</protein>